<dbReference type="EC" id="7.2.1.4"/>
<dbReference type="EMBL" id="Y14428">
    <property type="protein sequence ID" value="CAA74770.1"/>
    <property type="molecule type" value="Genomic_DNA"/>
</dbReference>
<dbReference type="EMBL" id="AE009439">
    <property type="protein sequence ID" value="AAM01874.1"/>
    <property type="molecule type" value="Genomic_DNA"/>
</dbReference>
<dbReference type="SMR" id="O32866"/>
<dbReference type="FunCoup" id="O32866">
    <property type="interactions" value="64"/>
</dbReference>
<dbReference type="STRING" id="190192.MK0659"/>
<dbReference type="PaxDb" id="190192-MK0659"/>
<dbReference type="EnsemblBacteria" id="AAM01874">
    <property type="protein sequence ID" value="AAM01874"/>
    <property type="gene ID" value="MK0659"/>
</dbReference>
<dbReference type="KEGG" id="mka:MK0659"/>
<dbReference type="HOGENOM" id="CLU_171544_0_0_2"/>
<dbReference type="InParanoid" id="O32866"/>
<dbReference type="OrthoDB" id="114034at2157"/>
<dbReference type="UniPathway" id="UPA00640">
    <property type="reaction ID" value="UER00698"/>
</dbReference>
<dbReference type="Proteomes" id="UP000001826">
    <property type="component" value="Chromosome"/>
</dbReference>
<dbReference type="GO" id="GO:0005886">
    <property type="term" value="C:plasma membrane"/>
    <property type="evidence" value="ECO:0007669"/>
    <property type="project" value="UniProtKB-SubCell"/>
</dbReference>
<dbReference type="GO" id="GO:0030269">
    <property type="term" value="F:tetrahydromethanopterin S-methyltransferase activity"/>
    <property type="evidence" value="ECO:0007669"/>
    <property type="project" value="UniProtKB-UniRule"/>
</dbReference>
<dbReference type="GO" id="GO:0019386">
    <property type="term" value="P:methanogenesis, from carbon dioxide"/>
    <property type="evidence" value="ECO:0007669"/>
    <property type="project" value="UniProtKB-UniRule"/>
</dbReference>
<dbReference type="GO" id="GO:0032259">
    <property type="term" value="P:methylation"/>
    <property type="evidence" value="ECO:0007669"/>
    <property type="project" value="UniProtKB-KW"/>
</dbReference>
<dbReference type="GO" id="GO:0006730">
    <property type="term" value="P:one-carbon metabolic process"/>
    <property type="evidence" value="ECO:0007669"/>
    <property type="project" value="UniProtKB-UniRule"/>
</dbReference>
<dbReference type="HAMAP" id="MF_01094">
    <property type="entry name" value="MtrB"/>
    <property type="match status" value="1"/>
</dbReference>
<dbReference type="InterPro" id="IPR008690">
    <property type="entry name" value="MtrB_MeTrfase"/>
</dbReference>
<dbReference type="NCBIfam" id="TIGR04166">
    <property type="entry name" value="methano_MtrB"/>
    <property type="match status" value="1"/>
</dbReference>
<dbReference type="NCBIfam" id="NF002129">
    <property type="entry name" value="PRK00965.1"/>
    <property type="match status" value="1"/>
</dbReference>
<dbReference type="Pfam" id="PF05440">
    <property type="entry name" value="MtrB"/>
    <property type="match status" value="1"/>
</dbReference>
<dbReference type="PIRSF" id="PIRSF005518">
    <property type="entry name" value="MtrB"/>
    <property type="match status" value="1"/>
</dbReference>
<name>MTRB_METKA</name>
<accession>O32866</accession>
<gene>
    <name type="primary">mtrB</name>
    <name type="ordered locus">MK0659</name>
</gene>
<reference key="1">
    <citation type="journal article" date="1997" name="Eur. J. Biochem.">
        <title>Identification of the active site histidine in the corrinoid protein MtrA of the energy-conserving methyltransferase complex from Methanobacterium thermoautotrophicum.</title>
        <authorList>
            <person name="Harms U."/>
            <person name="Thauer R.K."/>
        </authorList>
    </citation>
    <scope>NUCLEOTIDE SEQUENCE [GENOMIC DNA]</scope>
</reference>
<reference key="2">
    <citation type="journal article" date="2002" name="Proc. Natl. Acad. Sci. U.S.A.">
        <title>The complete genome of hyperthermophile Methanopyrus kandleri AV19 and monophyly of archaeal methanogens.</title>
        <authorList>
            <person name="Slesarev A.I."/>
            <person name="Mezhevaya K.V."/>
            <person name="Makarova K.S."/>
            <person name="Polushin N.N."/>
            <person name="Shcherbinina O.V."/>
            <person name="Shakhova V.V."/>
            <person name="Belova G.I."/>
            <person name="Aravind L."/>
            <person name="Natale D.A."/>
            <person name="Rogozin I.B."/>
            <person name="Tatusov R.L."/>
            <person name="Wolf Y.I."/>
            <person name="Stetter K.O."/>
            <person name="Malykh A.G."/>
            <person name="Koonin E.V."/>
            <person name="Kozyavkin S.A."/>
        </authorList>
    </citation>
    <scope>NUCLEOTIDE SEQUENCE [LARGE SCALE GENOMIC DNA]</scope>
    <source>
        <strain>AV19 / DSM 6324 / JCM 9639 / NBRC 100938</strain>
    </source>
</reference>
<evidence type="ECO:0000250" key="1"/>
<evidence type="ECO:0000255" key="2"/>
<evidence type="ECO:0000305" key="3"/>
<sequence length="112" mass="12227">MAIVLIDPESQIAMDAVTGAVAEWSEDVVTLDVMPLYEKVEELEQYVNDMMRAMDPSTTTWGTLPGREGVHETAGFLTNFAHGFVIGTMIVALVAFTLAAVYKLHALRLLGL</sequence>
<comment type="function">
    <text evidence="1">Part of a complex that catalyzes the formation of methyl-coenzyme M and tetrahydromethanopterin from coenzyme M and methyl-tetrahydromethanopterin. This is an energy-conserving, sodium-ion translocating step.</text>
</comment>
<comment type="catalytic activity">
    <reaction>
        <text>5-methyl-5,6,7,8-tetrahydromethanopterin + coenzyme M + 2 Na(+)(in) = 5,6,7,8-tetrahydromethanopterin + methyl-coenzyme M + 2 Na(+)(out)</text>
        <dbReference type="Rhea" id="RHEA:53492"/>
        <dbReference type="ChEBI" id="CHEBI:29101"/>
        <dbReference type="ChEBI" id="CHEBI:58103"/>
        <dbReference type="ChEBI" id="CHEBI:58116"/>
        <dbReference type="ChEBI" id="CHEBI:58286"/>
        <dbReference type="ChEBI" id="CHEBI:58319"/>
        <dbReference type="EC" id="7.2.1.4"/>
    </reaction>
</comment>
<comment type="pathway">
    <text>One-carbon metabolism; methanogenesis from CO(2); methyl-coenzyme M from 5,10-methylene-5,6,7,8-tetrahydromethanopterin: step 2/2.</text>
</comment>
<comment type="subunit">
    <text evidence="1">The complex is composed of 8 subunits; MtrA, MtrB, MtrC, MtrD, MtrE, MtrF, MtrG and MtrH.</text>
</comment>
<comment type="subcellular location">
    <subcellularLocation>
        <location evidence="3">Cell membrane</location>
        <topology evidence="3">Single-pass membrane protein</topology>
    </subcellularLocation>
</comment>
<comment type="similarity">
    <text evidence="3">Belongs to the MtrB family.</text>
</comment>
<proteinExistence type="inferred from homology"/>
<organism>
    <name type="scientific">Methanopyrus kandleri (strain AV19 / DSM 6324 / JCM 9639 / NBRC 100938)</name>
    <dbReference type="NCBI Taxonomy" id="190192"/>
    <lineage>
        <taxon>Archaea</taxon>
        <taxon>Methanobacteriati</taxon>
        <taxon>Methanobacteriota</taxon>
        <taxon>Methanomada group</taxon>
        <taxon>Methanopyri</taxon>
        <taxon>Methanopyrales</taxon>
        <taxon>Methanopyraceae</taxon>
        <taxon>Methanopyrus</taxon>
    </lineage>
</organism>
<feature type="chain" id="PRO_0000147515" description="Tetrahydromethanopterin S-methyltransferase subunit B">
    <location>
        <begin position="1"/>
        <end position="112"/>
    </location>
</feature>
<feature type="transmembrane region" description="Helical" evidence="2">
    <location>
        <begin position="80"/>
        <end position="100"/>
    </location>
</feature>
<protein>
    <recommendedName>
        <fullName>Tetrahydromethanopterin S-methyltransferase subunit B</fullName>
        <ecNumber>7.2.1.4</ecNumber>
    </recommendedName>
    <alternativeName>
        <fullName>N5-methyltetrahydromethanopterin--coenzyme M methyltransferase subunit B</fullName>
    </alternativeName>
</protein>
<keyword id="KW-1003">Cell membrane</keyword>
<keyword id="KW-0472">Membrane</keyword>
<keyword id="KW-0484">Methanogenesis</keyword>
<keyword id="KW-0489">Methyltransferase</keyword>
<keyword id="KW-0554">One-carbon metabolism</keyword>
<keyword id="KW-1185">Reference proteome</keyword>
<keyword id="KW-0808">Transferase</keyword>
<keyword id="KW-1278">Translocase</keyword>
<keyword id="KW-0812">Transmembrane</keyword>
<keyword id="KW-1133">Transmembrane helix</keyword>